<protein>
    <recommendedName>
        <fullName evidence="1">Small ribosomal subunit protein bS20</fullName>
    </recommendedName>
    <alternativeName>
        <fullName evidence="3">30S ribosomal protein S20</fullName>
    </alternativeName>
</protein>
<evidence type="ECO:0000255" key="1">
    <source>
        <dbReference type="HAMAP-Rule" id="MF_00500"/>
    </source>
</evidence>
<evidence type="ECO:0000256" key="2">
    <source>
        <dbReference type="SAM" id="MobiDB-lite"/>
    </source>
</evidence>
<evidence type="ECO:0000305" key="3"/>
<keyword id="KW-1185">Reference proteome</keyword>
<keyword id="KW-0687">Ribonucleoprotein</keyword>
<keyword id="KW-0689">Ribosomal protein</keyword>
<keyword id="KW-0694">RNA-binding</keyword>
<keyword id="KW-0699">rRNA-binding</keyword>
<proteinExistence type="inferred from homology"/>
<dbReference type="EMBL" id="CP000830">
    <property type="protein sequence ID" value="ABV95104.1"/>
    <property type="molecule type" value="Genomic_DNA"/>
</dbReference>
<dbReference type="RefSeq" id="WP_012180030.1">
    <property type="nucleotide sequence ID" value="NC_009952.1"/>
</dbReference>
<dbReference type="SMR" id="A8LNL0"/>
<dbReference type="STRING" id="398580.Dshi_3371"/>
<dbReference type="KEGG" id="dsh:Dshi_3371"/>
<dbReference type="eggNOG" id="COG0268">
    <property type="taxonomic scope" value="Bacteria"/>
</dbReference>
<dbReference type="HOGENOM" id="CLU_160655_3_0_5"/>
<dbReference type="OrthoDB" id="9807974at2"/>
<dbReference type="Proteomes" id="UP000006833">
    <property type="component" value="Chromosome"/>
</dbReference>
<dbReference type="GO" id="GO:0015935">
    <property type="term" value="C:small ribosomal subunit"/>
    <property type="evidence" value="ECO:0007669"/>
    <property type="project" value="TreeGrafter"/>
</dbReference>
<dbReference type="GO" id="GO:0070181">
    <property type="term" value="F:small ribosomal subunit rRNA binding"/>
    <property type="evidence" value="ECO:0007669"/>
    <property type="project" value="TreeGrafter"/>
</dbReference>
<dbReference type="GO" id="GO:0003735">
    <property type="term" value="F:structural constituent of ribosome"/>
    <property type="evidence" value="ECO:0007669"/>
    <property type="project" value="InterPro"/>
</dbReference>
<dbReference type="GO" id="GO:0006412">
    <property type="term" value="P:translation"/>
    <property type="evidence" value="ECO:0007669"/>
    <property type="project" value="UniProtKB-UniRule"/>
</dbReference>
<dbReference type="FunFam" id="1.20.58.110:FF:000001">
    <property type="entry name" value="30S ribosomal protein S20"/>
    <property type="match status" value="1"/>
</dbReference>
<dbReference type="Gene3D" id="1.20.58.110">
    <property type="entry name" value="Ribosomal protein S20"/>
    <property type="match status" value="1"/>
</dbReference>
<dbReference type="HAMAP" id="MF_00500">
    <property type="entry name" value="Ribosomal_bS20"/>
    <property type="match status" value="1"/>
</dbReference>
<dbReference type="InterPro" id="IPR002583">
    <property type="entry name" value="Ribosomal_bS20"/>
</dbReference>
<dbReference type="InterPro" id="IPR036510">
    <property type="entry name" value="Ribosomal_bS20_sf"/>
</dbReference>
<dbReference type="NCBIfam" id="TIGR00029">
    <property type="entry name" value="S20"/>
    <property type="match status" value="1"/>
</dbReference>
<dbReference type="PANTHER" id="PTHR33398">
    <property type="entry name" value="30S RIBOSOMAL PROTEIN S20"/>
    <property type="match status" value="1"/>
</dbReference>
<dbReference type="PANTHER" id="PTHR33398:SF1">
    <property type="entry name" value="SMALL RIBOSOMAL SUBUNIT PROTEIN BS20C"/>
    <property type="match status" value="1"/>
</dbReference>
<dbReference type="Pfam" id="PF01649">
    <property type="entry name" value="Ribosomal_S20p"/>
    <property type="match status" value="1"/>
</dbReference>
<dbReference type="SUPFAM" id="SSF46992">
    <property type="entry name" value="Ribosomal protein S20"/>
    <property type="match status" value="1"/>
</dbReference>
<reference key="1">
    <citation type="journal article" date="2010" name="ISME J.">
        <title>The complete genome sequence of the algal symbiont Dinoroseobacter shibae: a hitchhiker's guide to life in the sea.</title>
        <authorList>
            <person name="Wagner-Dobler I."/>
            <person name="Ballhausen B."/>
            <person name="Berger M."/>
            <person name="Brinkhoff T."/>
            <person name="Buchholz I."/>
            <person name="Bunk B."/>
            <person name="Cypionka H."/>
            <person name="Daniel R."/>
            <person name="Drepper T."/>
            <person name="Gerdts G."/>
            <person name="Hahnke S."/>
            <person name="Han C."/>
            <person name="Jahn D."/>
            <person name="Kalhoefer D."/>
            <person name="Kiss H."/>
            <person name="Klenk H.P."/>
            <person name="Kyrpides N."/>
            <person name="Liebl W."/>
            <person name="Liesegang H."/>
            <person name="Meincke L."/>
            <person name="Pati A."/>
            <person name="Petersen J."/>
            <person name="Piekarski T."/>
            <person name="Pommerenke C."/>
            <person name="Pradella S."/>
            <person name="Pukall R."/>
            <person name="Rabus R."/>
            <person name="Stackebrandt E."/>
            <person name="Thole S."/>
            <person name="Thompson L."/>
            <person name="Tielen P."/>
            <person name="Tomasch J."/>
            <person name="von Jan M."/>
            <person name="Wanphrut N."/>
            <person name="Wichels A."/>
            <person name="Zech H."/>
            <person name="Simon M."/>
        </authorList>
    </citation>
    <scope>NUCLEOTIDE SEQUENCE [LARGE SCALE GENOMIC DNA]</scope>
    <source>
        <strain>DSM 16493 / NCIMB 14021 / DFL 12</strain>
    </source>
</reference>
<sequence>MANSPQAKKRARQNERRAEVNKARRSRIRTFLRKVEEAIASGDSSAAADALRSAQPELMRGVTKGILHKNTASRKMSRLSKRVKALSA</sequence>
<accession>A8LNL0</accession>
<organism>
    <name type="scientific">Dinoroseobacter shibae (strain DSM 16493 / NCIMB 14021 / DFL 12)</name>
    <dbReference type="NCBI Taxonomy" id="398580"/>
    <lineage>
        <taxon>Bacteria</taxon>
        <taxon>Pseudomonadati</taxon>
        <taxon>Pseudomonadota</taxon>
        <taxon>Alphaproteobacteria</taxon>
        <taxon>Rhodobacterales</taxon>
        <taxon>Roseobacteraceae</taxon>
        <taxon>Dinoroseobacter</taxon>
    </lineage>
</organism>
<gene>
    <name evidence="1" type="primary">rpsT</name>
    <name type="ordered locus">Dshi_3371</name>
</gene>
<comment type="function">
    <text evidence="1">Binds directly to 16S ribosomal RNA.</text>
</comment>
<comment type="similarity">
    <text evidence="1">Belongs to the bacterial ribosomal protein bS20 family.</text>
</comment>
<name>RS20_DINSH</name>
<feature type="chain" id="PRO_1000081427" description="Small ribosomal subunit protein bS20">
    <location>
        <begin position="1"/>
        <end position="88"/>
    </location>
</feature>
<feature type="region of interest" description="Disordered" evidence="2">
    <location>
        <begin position="1"/>
        <end position="25"/>
    </location>
</feature>
<feature type="compositionally biased region" description="Basic and acidic residues" evidence="2">
    <location>
        <begin position="12"/>
        <end position="22"/>
    </location>
</feature>